<gene>
    <name type="ORF">ORF2</name>
</gene>
<accession>C1JJY1</accession>
<organismHost>
    <name type="scientific">Halorubrum sp. PV6</name>
    <dbReference type="NCBI Taxonomy" id="634157"/>
</organismHost>
<feature type="chain" id="PRO_0000420963" description="Uncharacterized protein 2">
    <location>
        <begin position="1"/>
        <end position="126"/>
    </location>
</feature>
<feature type="region of interest" description="Disordered" evidence="1">
    <location>
        <begin position="1"/>
        <end position="27"/>
    </location>
</feature>
<feature type="compositionally biased region" description="Acidic residues" evidence="1">
    <location>
        <begin position="10"/>
        <end position="27"/>
    </location>
</feature>
<name>ORF2_HAPV1</name>
<keyword id="KW-1185">Reference proteome</keyword>
<dbReference type="EMBL" id="FJ685651">
    <property type="protein sequence ID" value="ACO54897.1"/>
    <property type="molecule type" value="Genomic_DNA"/>
</dbReference>
<dbReference type="RefSeq" id="YP_002791887.1">
    <property type="nucleotide sequence ID" value="NC_012558.1"/>
</dbReference>
<dbReference type="SMR" id="C1JJY1"/>
<dbReference type="KEGG" id="vg:7755262"/>
<dbReference type="Proteomes" id="UP000009401">
    <property type="component" value="Genome"/>
</dbReference>
<sequence length="126" mass="14073">MSKSKTPNFDDMEVLDDTNDEYDDSESEWIDLDRGESVVGEIREINPDCGDYGTTVLELSRGLGDNVCMWSNRQIDNKIEQHGLGVGEVVGIKHTDREQTFTPDGSDEPVKFDVYEVRAVNVGGND</sequence>
<reference key="1">
    <citation type="journal article" date="2009" name="Mol. Microbiol.">
        <title>An ssDNA virus infecting archaea: a new lineage of viruses with a membrane envelope.</title>
        <authorList>
            <person name="Pietila M.K."/>
            <person name="Roine E."/>
            <person name="Paulin L."/>
            <person name="Kalkkinen N."/>
            <person name="Bamford D.H."/>
        </authorList>
    </citation>
    <scope>NUCLEOTIDE SEQUENCE [GENOMIC DNA]</scope>
</reference>
<protein>
    <recommendedName>
        <fullName>Uncharacterized protein 2</fullName>
    </recommendedName>
</protein>
<evidence type="ECO:0000256" key="1">
    <source>
        <dbReference type="SAM" id="MobiDB-lite"/>
    </source>
</evidence>
<proteinExistence type="predicted"/>
<organism>
    <name type="scientific">Halorubrum pleomorphic virus 1</name>
    <name type="common">HRPV-1</name>
    <dbReference type="NCBI Taxonomy" id="634168"/>
    <lineage>
        <taxon>Viruses</taxon>
        <taxon>Monodnaviria</taxon>
        <taxon>Trapavirae</taxon>
        <taxon>Saleviricota</taxon>
        <taxon>Huolimaviricetes</taxon>
        <taxon>Haloruvirales</taxon>
        <taxon>Pleolipoviridae</taxon>
        <taxon>Alphapleolipovirus</taxon>
        <taxon>Alphapleolipovirus finnoniense</taxon>
    </lineage>
</organism>